<organism>
    <name type="scientific">Streptococcus gordonii (strain Challis / ATCC 35105 / BCRC 15272 / CH1 / DL1 / V288)</name>
    <dbReference type="NCBI Taxonomy" id="467705"/>
    <lineage>
        <taxon>Bacteria</taxon>
        <taxon>Bacillati</taxon>
        <taxon>Bacillota</taxon>
        <taxon>Bacilli</taxon>
        <taxon>Lactobacillales</taxon>
        <taxon>Streptococcaceae</taxon>
        <taxon>Streptococcus</taxon>
    </lineage>
</organism>
<evidence type="ECO:0000255" key="1">
    <source>
        <dbReference type="HAMAP-Rule" id="MF_00254"/>
    </source>
</evidence>
<accession>A8AVS4</accession>
<protein>
    <recommendedName>
        <fullName evidence="1">Glycine--tRNA ligase alpha subunit</fullName>
        <ecNumber evidence="1">6.1.1.14</ecNumber>
    </recommendedName>
    <alternativeName>
        <fullName evidence="1">Glycyl-tRNA synthetase alpha subunit</fullName>
        <shortName evidence="1">GlyRS</shortName>
    </alternativeName>
</protein>
<comment type="catalytic activity">
    <reaction evidence="1">
        <text>tRNA(Gly) + glycine + ATP = glycyl-tRNA(Gly) + AMP + diphosphate</text>
        <dbReference type="Rhea" id="RHEA:16013"/>
        <dbReference type="Rhea" id="RHEA-COMP:9664"/>
        <dbReference type="Rhea" id="RHEA-COMP:9683"/>
        <dbReference type="ChEBI" id="CHEBI:30616"/>
        <dbReference type="ChEBI" id="CHEBI:33019"/>
        <dbReference type="ChEBI" id="CHEBI:57305"/>
        <dbReference type="ChEBI" id="CHEBI:78442"/>
        <dbReference type="ChEBI" id="CHEBI:78522"/>
        <dbReference type="ChEBI" id="CHEBI:456215"/>
        <dbReference type="EC" id="6.1.1.14"/>
    </reaction>
</comment>
<comment type="subunit">
    <text evidence="1">Tetramer of two alpha and two beta subunits.</text>
</comment>
<comment type="subcellular location">
    <subcellularLocation>
        <location evidence="1">Cytoplasm</location>
    </subcellularLocation>
</comment>
<comment type="similarity">
    <text evidence="1">Belongs to the class-II aminoacyl-tRNA synthetase family.</text>
</comment>
<gene>
    <name evidence="1" type="primary">glyQ</name>
    <name type="ordered locus">SGO_0568</name>
</gene>
<dbReference type="EC" id="6.1.1.14" evidence="1"/>
<dbReference type="EMBL" id="CP000725">
    <property type="protein sequence ID" value="ABV10626.1"/>
    <property type="molecule type" value="Genomic_DNA"/>
</dbReference>
<dbReference type="RefSeq" id="WP_002911276.1">
    <property type="nucleotide sequence ID" value="NC_009785.1"/>
</dbReference>
<dbReference type="SMR" id="A8AVS4"/>
<dbReference type="STRING" id="467705.SGO_0568"/>
<dbReference type="GeneID" id="93788280"/>
<dbReference type="KEGG" id="sgo:SGO_0568"/>
<dbReference type="eggNOG" id="COG0752">
    <property type="taxonomic scope" value="Bacteria"/>
</dbReference>
<dbReference type="HOGENOM" id="CLU_057066_1_0_9"/>
<dbReference type="Proteomes" id="UP000001131">
    <property type="component" value="Chromosome"/>
</dbReference>
<dbReference type="GO" id="GO:0005829">
    <property type="term" value="C:cytosol"/>
    <property type="evidence" value="ECO:0007669"/>
    <property type="project" value="TreeGrafter"/>
</dbReference>
<dbReference type="GO" id="GO:0005524">
    <property type="term" value="F:ATP binding"/>
    <property type="evidence" value="ECO:0007669"/>
    <property type="project" value="UniProtKB-UniRule"/>
</dbReference>
<dbReference type="GO" id="GO:0140096">
    <property type="term" value="F:catalytic activity, acting on a protein"/>
    <property type="evidence" value="ECO:0007669"/>
    <property type="project" value="UniProtKB-ARBA"/>
</dbReference>
<dbReference type="GO" id="GO:0004820">
    <property type="term" value="F:glycine-tRNA ligase activity"/>
    <property type="evidence" value="ECO:0007669"/>
    <property type="project" value="UniProtKB-UniRule"/>
</dbReference>
<dbReference type="GO" id="GO:0016740">
    <property type="term" value="F:transferase activity"/>
    <property type="evidence" value="ECO:0007669"/>
    <property type="project" value="UniProtKB-ARBA"/>
</dbReference>
<dbReference type="GO" id="GO:0006426">
    <property type="term" value="P:glycyl-tRNA aminoacylation"/>
    <property type="evidence" value="ECO:0007669"/>
    <property type="project" value="UniProtKB-UniRule"/>
</dbReference>
<dbReference type="CDD" id="cd00733">
    <property type="entry name" value="GlyRS_alpha_core"/>
    <property type="match status" value="1"/>
</dbReference>
<dbReference type="FunFam" id="3.30.930.10:FF:000006">
    <property type="entry name" value="Glycine--tRNA ligase alpha subunit"/>
    <property type="match status" value="1"/>
</dbReference>
<dbReference type="Gene3D" id="3.30.930.10">
    <property type="entry name" value="Bira Bifunctional Protein, Domain 2"/>
    <property type="match status" value="1"/>
</dbReference>
<dbReference type="Gene3D" id="1.20.58.180">
    <property type="entry name" value="Class II aaRS and biotin synthetases, domain 2"/>
    <property type="match status" value="1"/>
</dbReference>
<dbReference type="HAMAP" id="MF_00254">
    <property type="entry name" value="Gly_tRNA_synth_alpha"/>
    <property type="match status" value="1"/>
</dbReference>
<dbReference type="InterPro" id="IPR045864">
    <property type="entry name" value="aa-tRNA-synth_II/BPL/LPL"/>
</dbReference>
<dbReference type="InterPro" id="IPR006194">
    <property type="entry name" value="Gly-tRNA-synth_heterodimer"/>
</dbReference>
<dbReference type="InterPro" id="IPR002310">
    <property type="entry name" value="Gly-tRNA_ligase_asu"/>
</dbReference>
<dbReference type="NCBIfam" id="TIGR00388">
    <property type="entry name" value="glyQ"/>
    <property type="match status" value="1"/>
</dbReference>
<dbReference type="NCBIfam" id="NF006827">
    <property type="entry name" value="PRK09348.1"/>
    <property type="match status" value="1"/>
</dbReference>
<dbReference type="PANTHER" id="PTHR30075:SF2">
    <property type="entry name" value="GLYCINE--TRNA LIGASE, CHLOROPLASTIC_MITOCHONDRIAL 2"/>
    <property type="match status" value="1"/>
</dbReference>
<dbReference type="PANTHER" id="PTHR30075">
    <property type="entry name" value="GLYCYL-TRNA SYNTHETASE"/>
    <property type="match status" value="1"/>
</dbReference>
<dbReference type="Pfam" id="PF02091">
    <property type="entry name" value="tRNA-synt_2e"/>
    <property type="match status" value="1"/>
</dbReference>
<dbReference type="PRINTS" id="PR01044">
    <property type="entry name" value="TRNASYNTHGA"/>
</dbReference>
<dbReference type="SUPFAM" id="SSF55681">
    <property type="entry name" value="Class II aaRS and biotin synthetases"/>
    <property type="match status" value="1"/>
</dbReference>
<dbReference type="PROSITE" id="PS50861">
    <property type="entry name" value="AA_TRNA_LIGASE_II_GLYAB"/>
    <property type="match status" value="1"/>
</dbReference>
<proteinExistence type="inferred from homology"/>
<reference key="1">
    <citation type="journal article" date="2007" name="J. Bacteriol.">
        <title>Genome-wide transcriptional changes in Streptococcus gordonii in response to competence signaling peptide.</title>
        <authorList>
            <person name="Vickerman M.M."/>
            <person name="Iobst S."/>
            <person name="Jesionowski A.M."/>
            <person name="Gill S.R."/>
        </authorList>
    </citation>
    <scope>NUCLEOTIDE SEQUENCE [LARGE SCALE GENOMIC DNA]</scope>
    <source>
        <strain>Challis / ATCC 35105 / BCRC 15272 / CH1 / DL1 / V288</strain>
    </source>
</reference>
<feature type="chain" id="PRO_1000078537" description="Glycine--tRNA ligase alpha subunit">
    <location>
        <begin position="1"/>
        <end position="305"/>
    </location>
</feature>
<name>SYGA_STRGC</name>
<keyword id="KW-0030">Aminoacyl-tRNA synthetase</keyword>
<keyword id="KW-0067">ATP-binding</keyword>
<keyword id="KW-0963">Cytoplasm</keyword>
<keyword id="KW-0436">Ligase</keyword>
<keyword id="KW-0547">Nucleotide-binding</keyword>
<keyword id="KW-0648">Protein biosynthesis</keyword>
<keyword id="KW-1185">Reference proteome</keyword>
<sequence>MSKKLTFQEIILTLQQFWNDQGCMLMQAYDNEKGAGTMSPYTFLRAIGPEPWNAAYVEPSRRPADGRYGENPNRLYQHHQFQVVMKPSPSNIQELYLQSLELLGINPLEHDIRFVEDNWENPSTGSAGLGWEVWLDGMEITQFTYFQQVGGLPTQPVTAEVTYGLERLASYIQEVDSVYDIEWADGVKYGEIFTHPEYEHSKYSFEVSDQDLLLGNFERFEAEAKRCLDEHLVHPAYDYVLKCSHTFNLLDARGAVSVTERAGYIARIRNLARVVAKTFVAERKRLGYPLLDAETREKLLAEEGE</sequence>